<evidence type="ECO:0000250" key="1"/>
<evidence type="ECO:0000250" key="2">
    <source>
        <dbReference type="UniProtKB" id="Q8IZA0"/>
    </source>
</evidence>
<evidence type="ECO:0000255" key="3"/>
<evidence type="ECO:0000255" key="4">
    <source>
        <dbReference type="PROSITE-ProRule" id="PRU00151"/>
    </source>
</evidence>
<evidence type="ECO:0000255" key="5">
    <source>
        <dbReference type="PROSITE-ProRule" id="PRU00341"/>
    </source>
</evidence>
<evidence type="ECO:0000256" key="6">
    <source>
        <dbReference type="SAM" id="MobiDB-lite"/>
    </source>
</evidence>
<evidence type="ECO:0000269" key="7">
    <source>
    </source>
</evidence>
<evidence type="ECO:0000303" key="8">
    <source>
    </source>
</evidence>
<evidence type="ECO:0000303" key="9">
    <source>
    </source>
</evidence>
<evidence type="ECO:0000305" key="10"/>
<evidence type="ECO:0000305" key="11">
    <source>
    </source>
</evidence>
<evidence type="ECO:0007744" key="12">
    <source>
    </source>
</evidence>
<keyword id="KW-0025">Alternative splicing</keyword>
<keyword id="KW-1003">Cell membrane</keyword>
<keyword id="KW-0325">Glycoprotein</keyword>
<keyword id="KW-0333">Golgi apparatus</keyword>
<keyword id="KW-0472">Membrane</keyword>
<keyword id="KW-0597">Phosphoprotein</keyword>
<keyword id="KW-1185">Reference proteome</keyword>
<keyword id="KW-0677">Repeat</keyword>
<keyword id="KW-0812">Transmembrane</keyword>
<keyword id="KW-1133">Transmembrane helix</keyword>
<dbReference type="EMBL" id="AK043006">
    <property type="protein sequence ID" value="BAC31432.1"/>
    <property type="molecule type" value="mRNA"/>
</dbReference>
<dbReference type="EMBL" id="AK049570">
    <property type="protein sequence ID" value="BAC33818.1"/>
    <property type="molecule type" value="mRNA"/>
</dbReference>
<dbReference type="EMBL" id="AK084668">
    <property type="protein sequence ID" value="BAC39244.1"/>
    <property type="molecule type" value="mRNA"/>
</dbReference>
<dbReference type="EMBL" id="AK147569">
    <property type="protein sequence ID" value="BAE27999.1"/>
    <property type="molecule type" value="mRNA"/>
</dbReference>
<dbReference type="EMBL" id="AK161493">
    <property type="protein sequence ID" value="BAE36422.1"/>
    <property type="molecule type" value="mRNA"/>
</dbReference>
<dbReference type="EMBL" id="AK170261">
    <property type="protein sequence ID" value="BAE41669.1"/>
    <property type="molecule type" value="mRNA"/>
</dbReference>
<dbReference type="EMBL" id="AL606908">
    <property type="status" value="NOT_ANNOTATED_CDS"/>
    <property type="molecule type" value="Genomic_DNA"/>
</dbReference>
<dbReference type="EMBL" id="BC022154">
    <property type="protein sequence ID" value="AAH22154.1"/>
    <property type="status" value="ALT_SEQ"/>
    <property type="molecule type" value="mRNA"/>
</dbReference>
<dbReference type="EMBL" id="BC028869">
    <property type="protein sequence ID" value="AAH28869.1"/>
    <property type="molecule type" value="mRNA"/>
</dbReference>
<dbReference type="CCDS" id="CCDS18660.1">
    <molecule id="Q8K135-2"/>
</dbReference>
<dbReference type="CCDS" id="CCDS18661.1">
    <molecule id="Q8K135-1"/>
</dbReference>
<dbReference type="RefSeq" id="NP_001030602.1">
    <property type="nucleotide sequence ID" value="NM_001035525.1"/>
</dbReference>
<dbReference type="RefSeq" id="NP_001030603.1">
    <property type="nucleotide sequence ID" value="NM_001035526.1"/>
</dbReference>
<dbReference type="RefSeq" id="NP_598647.1">
    <molecule id="Q8K135-1"/>
    <property type="nucleotide sequence ID" value="NM_133886.2"/>
</dbReference>
<dbReference type="RefSeq" id="XP_017175383.1">
    <molecule id="Q8K135-1"/>
    <property type="nucleotide sequence ID" value="XM_017319894.1"/>
</dbReference>
<dbReference type="RefSeq" id="XP_017175384.1">
    <molecule id="Q8K135-1"/>
    <property type="nucleotide sequence ID" value="XM_017319895.1"/>
</dbReference>
<dbReference type="RefSeq" id="XP_017175385.1">
    <molecule id="Q8K135-1"/>
    <property type="nucleotide sequence ID" value="XM_017319896.1"/>
</dbReference>
<dbReference type="RefSeq" id="XP_017175386.1">
    <molecule id="Q8K135-1"/>
    <property type="nucleotide sequence ID" value="XM_017319897.1"/>
</dbReference>
<dbReference type="SMR" id="Q8K135"/>
<dbReference type="BioGRID" id="221432">
    <property type="interactions" value="1"/>
</dbReference>
<dbReference type="FunCoup" id="Q8K135">
    <property type="interactions" value="2364"/>
</dbReference>
<dbReference type="STRING" id="10090.ENSMUSP00000099667"/>
<dbReference type="GlyConnect" id="2269">
    <property type="glycosylation" value="3 N-Linked glycans (2 sites)"/>
</dbReference>
<dbReference type="GlyConnect" id="2422">
    <molecule id="Q8K135-2"/>
    <property type="glycosylation" value="2 N-Linked glycans (1 site)"/>
</dbReference>
<dbReference type="GlyCosmos" id="Q8K135">
    <property type="glycosylation" value="4 sites, 3 glycans"/>
</dbReference>
<dbReference type="GlyGen" id="Q8K135">
    <property type="glycosylation" value="10 sites, 13 N-linked glycans (8 sites), 1 O-linked glycan (1 site)"/>
</dbReference>
<dbReference type="iPTMnet" id="Q8K135"/>
<dbReference type="PhosphoSitePlus" id="Q8K135"/>
<dbReference type="SwissPalm" id="Q8K135"/>
<dbReference type="CPTAC" id="non-CPTAC-3586"/>
<dbReference type="PaxDb" id="10090-ENSMUSP00000099667"/>
<dbReference type="PeptideAtlas" id="Q8K135"/>
<dbReference type="ProteomicsDB" id="268947">
    <molecule id="Q8K135-1"/>
</dbReference>
<dbReference type="ProteomicsDB" id="268948">
    <molecule id="Q8K135-2"/>
</dbReference>
<dbReference type="Pumba" id="Q8K135"/>
<dbReference type="Antibodypedia" id="2498">
    <property type="antibodies" value="86 antibodies from 18 providers"/>
</dbReference>
<dbReference type="DNASU" id="100317"/>
<dbReference type="Ensembl" id="ENSMUST00000047431.11">
    <molecule id="Q8K135-1"/>
    <property type="protein sequence ID" value="ENSMUSP00000037802.5"/>
    <property type="gene ID" value="ENSMUSG00000028830.15"/>
</dbReference>
<dbReference type="GeneID" id="100317"/>
<dbReference type="KEGG" id="mmu:100317"/>
<dbReference type="UCSC" id="uc008utw.1">
    <molecule id="Q8K135-1"/>
    <property type="organism name" value="mouse"/>
</dbReference>
<dbReference type="AGR" id="MGI:2140475"/>
<dbReference type="MGI" id="MGI:2140475">
    <property type="gene designation" value="AU040320"/>
</dbReference>
<dbReference type="VEuPathDB" id="HostDB:ENSMUSG00000028830"/>
<dbReference type="eggNOG" id="ENOG502QR8M">
    <property type="taxonomic scope" value="Eukaryota"/>
</dbReference>
<dbReference type="GeneTree" id="ENSGT00940000157613"/>
<dbReference type="HOGENOM" id="CLU_009448_0_0_1"/>
<dbReference type="InParanoid" id="Q8K135"/>
<dbReference type="OrthoDB" id="536372at2759"/>
<dbReference type="PhylomeDB" id="Q8K135"/>
<dbReference type="TreeFam" id="TF323356"/>
<dbReference type="BioGRID-ORCS" id="100317">
    <property type="hits" value="1 hit in 75 CRISPR screens"/>
</dbReference>
<dbReference type="ChiTaRS" id="AU040320">
    <property type="organism name" value="mouse"/>
</dbReference>
<dbReference type="PRO" id="PR:Q8K135"/>
<dbReference type="Proteomes" id="UP000000589">
    <property type="component" value="Chromosome 4"/>
</dbReference>
<dbReference type="RNAct" id="Q8K135">
    <property type="molecule type" value="protein"/>
</dbReference>
<dbReference type="Bgee" id="ENSMUSG00000028830">
    <property type="expression patterns" value="Expressed in seminal vesicle and 272 other cell types or tissues"/>
</dbReference>
<dbReference type="ExpressionAtlas" id="Q8K135">
    <property type="expression patterns" value="baseline and differential"/>
</dbReference>
<dbReference type="GO" id="GO:0031410">
    <property type="term" value="C:cytoplasmic vesicle"/>
    <property type="evidence" value="ECO:0000250"/>
    <property type="project" value="UniProtKB"/>
</dbReference>
<dbReference type="GO" id="GO:0000139">
    <property type="term" value="C:Golgi membrane"/>
    <property type="evidence" value="ECO:0007669"/>
    <property type="project" value="UniProtKB-SubCell"/>
</dbReference>
<dbReference type="GO" id="GO:0005730">
    <property type="term" value="C:nucleolus"/>
    <property type="evidence" value="ECO:0007669"/>
    <property type="project" value="Ensembl"/>
</dbReference>
<dbReference type="GO" id="GO:0005886">
    <property type="term" value="C:plasma membrane"/>
    <property type="evidence" value="ECO:0007669"/>
    <property type="project" value="UniProtKB-SubCell"/>
</dbReference>
<dbReference type="GO" id="GO:0005802">
    <property type="term" value="C:trans-Golgi network"/>
    <property type="evidence" value="ECO:0000314"/>
    <property type="project" value="MGI"/>
</dbReference>
<dbReference type="GO" id="GO:0001675">
    <property type="term" value="P:acrosome assembly"/>
    <property type="evidence" value="ECO:0000315"/>
    <property type="project" value="MGI"/>
</dbReference>
<dbReference type="GO" id="GO:0030317">
    <property type="term" value="P:flagellated sperm motility"/>
    <property type="evidence" value="ECO:0000315"/>
    <property type="project" value="MGI"/>
</dbReference>
<dbReference type="GO" id="GO:0001764">
    <property type="term" value="P:neuron migration"/>
    <property type="evidence" value="ECO:0000315"/>
    <property type="project" value="MGI"/>
</dbReference>
<dbReference type="GO" id="GO:0120211">
    <property type="term" value="P:proacrosomal vesicle fusion"/>
    <property type="evidence" value="ECO:0000315"/>
    <property type="project" value="MGI"/>
</dbReference>
<dbReference type="GO" id="GO:0019065">
    <property type="term" value="P:receptor-mediated endocytosis of virus by host cell"/>
    <property type="evidence" value="ECO:0000315"/>
    <property type="project" value="MGI"/>
</dbReference>
<dbReference type="GO" id="GO:0010996">
    <property type="term" value="P:response to auditory stimulus"/>
    <property type="evidence" value="ECO:0000315"/>
    <property type="project" value="MGI"/>
</dbReference>
<dbReference type="GO" id="GO:0007283">
    <property type="term" value="P:spermatogenesis"/>
    <property type="evidence" value="ECO:0000315"/>
    <property type="project" value="MGI"/>
</dbReference>
<dbReference type="CDD" id="cd00146">
    <property type="entry name" value="PKD"/>
    <property type="match status" value="4"/>
</dbReference>
<dbReference type="FunFam" id="2.60.40.10:FF:000061">
    <property type="entry name" value="Dyslexia-associated protein KIAA0319 homolog"/>
    <property type="match status" value="2"/>
</dbReference>
<dbReference type="FunFam" id="2.60.40.10:FF:000258">
    <property type="entry name" value="Dyslexia-associated protein KIAA0319 homolog"/>
    <property type="match status" value="1"/>
</dbReference>
<dbReference type="FunFam" id="2.60.40.10:FF:000319">
    <property type="entry name" value="Dyslexia-associated protein KIAA0319 homolog"/>
    <property type="match status" value="1"/>
</dbReference>
<dbReference type="FunFam" id="2.60.40.10:FF:000257">
    <property type="entry name" value="Dyslexia-associated protein KIAA0319-like"/>
    <property type="match status" value="1"/>
</dbReference>
<dbReference type="Gene3D" id="2.60.40.10">
    <property type="entry name" value="Immunoglobulins"/>
    <property type="match status" value="5"/>
</dbReference>
<dbReference type="InterPro" id="IPR013783">
    <property type="entry name" value="Ig-like_fold"/>
</dbReference>
<dbReference type="InterPro" id="IPR029865">
    <property type="entry name" value="KIAA0319-like"/>
</dbReference>
<dbReference type="InterPro" id="IPR056502">
    <property type="entry name" value="KIAA0319-like_C"/>
</dbReference>
<dbReference type="InterPro" id="IPR013980">
    <property type="entry name" value="MANSC_dom"/>
</dbReference>
<dbReference type="InterPro" id="IPR022409">
    <property type="entry name" value="PKD/Chitinase_dom"/>
</dbReference>
<dbReference type="InterPro" id="IPR000601">
    <property type="entry name" value="PKD_dom"/>
</dbReference>
<dbReference type="InterPro" id="IPR035986">
    <property type="entry name" value="PKD_dom_sf"/>
</dbReference>
<dbReference type="PANTHER" id="PTHR46182:SF3">
    <property type="entry name" value="DYSLEXIA-ASSOCIATED PROTEIN KIAA0319-LIKE PROTEIN"/>
    <property type="match status" value="1"/>
</dbReference>
<dbReference type="PANTHER" id="PTHR46182">
    <property type="entry name" value="FI19480P1"/>
    <property type="match status" value="1"/>
</dbReference>
<dbReference type="Pfam" id="PF22352">
    <property type="entry name" value="K319L-like_PKD"/>
    <property type="match status" value="5"/>
</dbReference>
<dbReference type="Pfam" id="PF23620">
    <property type="entry name" value="KIAA0319"/>
    <property type="match status" value="1"/>
</dbReference>
<dbReference type="Pfam" id="PF23597">
    <property type="entry name" value="KIAA0319_N"/>
    <property type="match status" value="1"/>
</dbReference>
<dbReference type="SMART" id="SM00089">
    <property type="entry name" value="PKD"/>
    <property type="match status" value="5"/>
</dbReference>
<dbReference type="SUPFAM" id="SSF49299">
    <property type="entry name" value="PKD domain"/>
    <property type="match status" value="4"/>
</dbReference>
<dbReference type="PROSITE" id="PS50986">
    <property type="entry name" value="MANSC"/>
    <property type="match status" value="1"/>
</dbReference>
<dbReference type="PROSITE" id="PS50093">
    <property type="entry name" value="PKD"/>
    <property type="match status" value="1"/>
</dbReference>
<name>K319L_MOUSE</name>
<gene>
    <name evidence="2" type="primary">Kiaa0319l</name>
    <name evidence="9" type="synonym">Aavr</name>
</gene>
<sequence>MEKRLGVKPSPASWVLPGYCWQTSVKLPRSLYLLYSFFCFSVLWLSTDADESRCQQGKTLYGAGLRTEGENHLRLLAGSLPFHACRAACCRDSACHALWWLEGMCFQADCSKPQSCQPFRTDSSNSMLIIFQKSQTTDDLGLLPEDDEPHLLRLGWGRTSWRRQSLLGAPLTLSVPSSHHQSLLRDRQKRDLSVVPTHGAMQHSKVNHSEEAGALSPTSAEVRKTITVAGSFTSNHTTQTPEWPKNVSIHPEPSEHSSPVSGTPQVKSTEHSPTDAPLPVAPSYSYATPTPQASSQSTSAPHPVVKELVVSAGKSVQITLPKNEVQLNAFVLPEAEPGETYTYDWQLITHPTDYSGEVERKHSQSLQLSKLTPGLYEFKVTVDGQNAHGEGYVNVTVKPEPRKNRPPVAVVSPQFQEISLPTTSTIIDGSQSTDDDKIVQYHWEELKGPLREEKISEDTAILKLSKLVPGNYTFSLTVVDSDGATNSTTASLTVNKAVDYPPVANAGPNQVITLPQNSITLFGNQSTDDHGITSYEWSLSPSSKGKVVEMQGVRTPALQLSAMQEGDYTYQLTVTDTAGQQATAQVTVIVQPENNKPPQADAGPDKELTLPVDSTTLDGSKSTDDQRVVSYLWEQSRGPDGVQLENANSSVATVTGLQVGTYVFTLTVKDERNLQSQSSVNVIVKEEINKPPVAKIAGNVVVTLPTSTAELDGSRSSDDKGIVSYLWTRDETSPAAGEVLNHSDHHPVLFLSNLVEGTYTFHLKVTDAKGESDTDRTTVEVKPDPRKSNLVEIILDVNVSQLTERLKGMLIRQIGVLLGVLDSDIIVQKIQPYTEQSTKMLFFVQNDPPHQLFKGHEVAAMLKSELQKQKADFLIFRALEISTVTCQLNCSDHGHCDSFTKRCVCDPFWMENFIKVQLRDGDSNCEWSVLYVIIASFVIVVALGILSWTTICCCKRQKGKPKRKSRYKILDATDQESLELKPTSRAGSKQKGPTLSSSLMHSESELDSDDAIFTWPDREKGKLLYGQNGSVPNGQTPLKSRSAREEIL</sequence>
<feature type="chain" id="PRO_0000329065" description="Dyslexia-associated protein KIAA0319-like protein">
    <location>
        <begin position="1"/>
        <end position="1048"/>
    </location>
</feature>
<feature type="topological domain" description="Cytoplasmic" evidence="3">
    <location>
        <begin position="1"/>
        <end position="29"/>
    </location>
</feature>
<feature type="transmembrane region" description="Helical" evidence="3">
    <location>
        <begin position="30"/>
        <end position="50"/>
    </location>
</feature>
<feature type="topological domain" description="Extracellular" evidence="3">
    <location>
        <begin position="51"/>
        <end position="928"/>
    </location>
</feature>
<feature type="transmembrane region" description="Helical" evidence="3">
    <location>
        <begin position="929"/>
        <end position="949"/>
    </location>
</feature>
<feature type="topological domain" description="Cytoplasmic" evidence="3">
    <location>
        <begin position="950"/>
        <end position="1048"/>
    </location>
</feature>
<feature type="domain" description="MANSC" evidence="5">
    <location>
        <begin position="49"/>
        <end position="127"/>
    </location>
</feature>
<feature type="domain" description="PKD 1" evidence="4">
    <location>
        <begin position="309"/>
        <end position="400"/>
    </location>
</feature>
<feature type="domain" description="PKD 2" evidence="4">
    <location>
        <begin position="408"/>
        <end position="497"/>
    </location>
</feature>
<feature type="domain" description="PKD 3" evidence="4">
    <location>
        <begin position="503"/>
        <end position="593"/>
    </location>
</feature>
<feature type="domain" description="PKD 4" evidence="4">
    <location>
        <begin position="599"/>
        <end position="687"/>
    </location>
</feature>
<feature type="domain" description="PKD 5" evidence="4">
    <location>
        <begin position="693"/>
        <end position="784"/>
    </location>
</feature>
<feature type="region of interest" description="Disordered" evidence="6">
    <location>
        <begin position="198"/>
        <end position="218"/>
    </location>
</feature>
<feature type="region of interest" description="Disordered" evidence="6">
    <location>
        <begin position="231"/>
        <end position="300"/>
    </location>
</feature>
<feature type="region of interest" description="Disordered" evidence="6">
    <location>
        <begin position="593"/>
        <end position="623"/>
    </location>
</feature>
<feature type="region of interest" description="Disordered" evidence="6">
    <location>
        <begin position="980"/>
        <end position="1007"/>
    </location>
</feature>
<feature type="region of interest" description="Disordered" evidence="6">
    <location>
        <begin position="1024"/>
        <end position="1048"/>
    </location>
</feature>
<feature type="compositionally biased region" description="Polar residues" evidence="6">
    <location>
        <begin position="231"/>
        <end position="241"/>
    </location>
</feature>
<feature type="compositionally biased region" description="Low complexity" evidence="6">
    <location>
        <begin position="247"/>
        <end position="261"/>
    </location>
</feature>
<feature type="compositionally biased region" description="Low complexity" evidence="6">
    <location>
        <begin position="287"/>
        <end position="300"/>
    </location>
</feature>
<feature type="compositionally biased region" description="Polar residues" evidence="6">
    <location>
        <begin position="985"/>
        <end position="994"/>
    </location>
</feature>
<feature type="compositionally biased region" description="Polar residues" evidence="6">
    <location>
        <begin position="1027"/>
        <end position="1039"/>
    </location>
</feature>
<feature type="modified residue" description="Phosphothreonine" evidence="2">
    <location>
        <position position="973"/>
    </location>
</feature>
<feature type="modified residue" description="Phosphoserine" evidence="2">
    <location>
        <position position="977"/>
    </location>
</feature>
<feature type="modified residue" description="Phosphoserine" evidence="12">
    <location>
        <position position="1008"/>
    </location>
</feature>
<feature type="modified residue" description="Phosphoserine" evidence="2">
    <location>
        <position position="1030"/>
    </location>
</feature>
<feature type="modified residue" description="Phosphothreonine" evidence="2">
    <location>
        <position position="1036"/>
    </location>
</feature>
<feature type="glycosylation site" description="N-linked (GlcNAc...) asparagine" evidence="3">
    <location>
        <position position="246"/>
    </location>
</feature>
<feature type="glycosylation site" description="N-linked (GlcNAc...) asparagine" evidence="3">
    <location>
        <position position="394"/>
    </location>
</feature>
<feature type="splice variant" id="VSP_032956" description="In isoform 2." evidence="8">
    <original>YGQNGSVPNGQTPLKSRSAREEIL</original>
    <variation>ALHWCRSQSLHHIGWWCRAPVCHETSSTNSTPGSDSGFCKGGKNLSSDYRTRTKSALVHGK</variation>
    <location>
        <begin position="1025"/>
        <end position="1048"/>
    </location>
</feature>
<feature type="sequence conflict" description="In Ref. 1; BAC39244." evidence="10" ref="1">
    <original>R</original>
    <variation>G</variation>
    <location>
        <position position="4"/>
    </location>
</feature>
<feature type="sequence conflict" description="In Ref. 1; BAE36422." evidence="10" ref="1">
    <location>
        <position position="579"/>
    </location>
</feature>
<feature type="sequence conflict" description="In Ref. 1; BAC33818." evidence="10" ref="1">
    <original>G</original>
    <variation>V</variation>
    <location>
        <position position="656"/>
    </location>
</feature>
<feature type="sequence conflict" description="In Ref. 1; BAC33818." evidence="10" ref="1">
    <original>V</original>
    <variation>A</variation>
    <location>
        <position position="684"/>
    </location>
</feature>
<proteinExistence type="evidence at protein level"/>
<protein>
    <recommendedName>
        <fullName evidence="2">Dyslexia-associated protein KIAA0319-like protein</fullName>
    </recommendedName>
    <alternativeName>
        <fullName evidence="2">Adeno-associated virus receptor</fullName>
        <shortName evidence="2">AAVR</shortName>
    </alternativeName>
</protein>
<reference key="1">
    <citation type="journal article" date="2005" name="Science">
        <title>The transcriptional landscape of the mammalian genome.</title>
        <authorList>
            <person name="Carninci P."/>
            <person name="Kasukawa T."/>
            <person name="Katayama S."/>
            <person name="Gough J."/>
            <person name="Frith M.C."/>
            <person name="Maeda N."/>
            <person name="Oyama R."/>
            <person name="Ravasi T."/>
            <person name="Lenhard B."/>
            <person name="Wells C."/>
            <person name="Kodzius R."/>
            <person name="Shimokawa K."/>
            <person name="Bajic V.B."/>
            <person name="Brenner S.E."/>
            <person name="Batalov S."/>
            <person name="Forrest A.R."/>
            <person name="Zavolan M."/>
            <person name="Davis M.J."/>
            <person name="Wilming L.G."/>
            <person name="Aidinis V."/>
            <person name="Allen J.E."/>
            <person name="Ambesi-Impiombato A."/>
            <person name="Apweiler R."/>
            <person name="Aturaliya R.N."/>
            <person name="Bailey T.L."/>
            <person name="Bansal M."/>
            <person name="Baxter L."/>
            <person name="Beisel K.W."/>
            <person name="Bersano T."/>
            <person name="Bono H."/>
            <person name="Chalk A.M."/>
            <person name="Chiu K.P."/>
            <person name="Choudhary V."/>
            <person name="Christoffels A."/>
            <person name="Clutterbuck D.R."/>
            <person name="Crowe M.L."/>
            <person name="Dalla E."/>
            <person name="Dalrymple B.P."/>
            <person name="de Bono B."/>
            <person name="Della Gatta G."/>
            <person name="di Bernardo D."/>
            <person name="Down T."/>
            <person name="Engstrom P."/>
            <person name="Fagiolini M."/>
            <person name="Faulkner G."/>
            <person name="Fletcher C.F."/>
            <person name="Fukushima T."/>
            <person name="Furuno M."/>
            <person name="Futaki S."/>
            <person name="Gariboldi M."/>
            <person name="Georgii-Hemming P."/>
            <person name="Gingeras T.R."/>
            <person name="Gojobori T."/>
            <person name="Green R.E."/>
            <person name="Gustincich S."/>
            <person name="Harbers M."/>
            <person name="Hayashi Y."/>
            <person name="Hensch T.K."/>
            <person name="Hirokawa N."/>
            <person name="Hill D."/>
            <person name="Huminiecki L."/>
            <person name="Iacono M."/>
            <person name="Ikeo K."/>
            <person name="Iwama A."/>
            <person name="Ishikawa T."/>
            <person name="Jakt M."/>
            <person name="Kanapin A."/>
            <person name="Katoh M."/>
            <person name="Kawasawa Y."/>
            <person name="Kelso J."/>
            <person name="Kitamura H."/>
            <person name="Kitano H."/>
            <person name="Kollias G."/>
            <person name="Krishnan S.P."/>
            <person name="Kruger A."/>
            <person name="Kummerfeld S.K."/>
            <person name="Kurochkin I.V."/>
            <person name="Lareau L.F."/>
            <person name="Lazarevic D."/>
            <person name="Lipovich L."/>
            <person name="Liu J."/>
            <person name="Liuni S."/>
            <person name="McWilliam S."/>
            <person name="Madan Babu M."/>
            <person name="Madera M."/>
            <person name="Marchionni L."/>
            <person name="Matsuda H."/>
            <person name="Matsuzawa S."/>
            <person name="Miki H."/>
            <person name="Mignone F."/>
            <person name="Miyake S."/>
            <person name="Morris K."/>
            <person name="Mottagui-Tabar S."/>
            <person name="Mulder N."/>
            <person name="Nakano N."/>
            <person name="Nakauchi H."/>
            <person name="Ng P."/>
            <person name="Nilsson R."/>
            <person name="Nishiguchi S."/>
            <person name="Nishikawa S."/>
            <person name="Nori F."/>
            <person name="Ohara O."/>
            <person name="Okazaki Y."/>
            <person name="Orlando V."/>
            <person name="Pang K.C."/>
            <person name="Pavan W.J."/>
            <person name="Pavesi G."/>
            <person name="Pesole G."/>
            <person name="Petrovsky N."/>
            <person name="Piazza S."/>
            <person name="Reed J."/>
            <person name="Reid J.F."/>
            <person name="Ring B.Z."/>
            <person name="Ringwald M."/>
            <person name="Rost B."/>
            <person name="Ruan Y."/>
            <person name="Salzberg S.L."/>
            <person name="Sandelin A."/>
            <person name="Schneider C."/>
            <person name="Schoenbach C."/>
            <person name="Sekiguchi K."/>
            <person name="Semple C.A."/>
            <person name="Seno S."/>
            <person name="Sessa L."/>
            <person name="Sheng Y."/>
            <person name="Shibata Y."/>
            <person name="Shimada H."/>
            <person name="Shimada K."/>
            <person name="Silva D."/>
            <person name="Sinclair B."/>
            <person name="Sperling S."/>
            <person name="Stupka E."/>
            <person name="Sugiura K."/>
            <person name="Sultana R."/>
            <person name="Takenaka Y."/>
            <person name="Taki K."/>
            <person name="Tammoja K."/>
            <person name="Tan S.L."/>
            <person name="Tang S."/>
            <person name="Taylor M.S."/>
            <person name="Tegner J."/>
            <person name="Teichmann S.A."/>
            <person name="Ueda H.R."/>
            <person name="van Nimwegen E."/>
            <person name="Verardo R."/>
            <person name="Wei C.L."/>
            <person name="Yagi K."/>
            <person name="Yamanishi H."/>
            <person name="Zabarovsky E."/>
            <person name="Zhu S."/>
            <person name="Zimmer A."/>
            <person name="Hide W."/>
            <person name="Bult C."/>
            <person name="Grimmond S.M."/>
            <person name="Teasdale R.D."/>
            <person name="Liu E.T."/>
            <person name="Brusic V."/>
            <person name="Quackenbush J."/>
            <person name="Wahlestedt C."/>
            <person name="Mattick J.S."/>
            <person name="Hume D.A."/>
            <person name="Kai C."/>
            <person name="Sasaki D."/>
            <person name="Tomaru Y."/>
            <person name="Fukuda S."/>
            <person name="Kanamori-Katayama M."/>
            <person name="Suzuki M."/>
            <person name="Aoki J."/>
            <person name="Arakawa T."/>
            <person name="Iida J."/>
            <person name="Imamura K."/>
            <person name="Itoh M."/>
            <person name="Kato T."/>
            <person name="Kawaji H."/>
            <person name="Kawagashira N."/>
            <person name="Kawashima T."/>
            <person name="Kojima M."/>
            <person name="Kondo S."/>
            <person name="Konno H."/>
            <person name="Nakano K."/>
            <person name="Ninomiya N."/>
            <person name="Nishio T."/>
            <person name="Okada M."/>
            <person name="Plessy C."/>
            <person name="Shibata K."/>
            <person name="Shiraki T."/>
            <person name="Suzuki S."/>
            <person name="Tagami M."/>
            <person name="Waki K."/>
            <person name="Watahiki A."/>
            <person name="Okamura-Oho Y."/>
            <person name="Suzuki H."/>
            <person name="Kawai J."/>
            <person name="Hayashizaki Y."/>
        </authorList>
    </citation>
    <scope>NUCLEOTIDE SEQUENCE [LARGE SCALE MRNA] (ISOFORMS 1 AND 2)</scope>
    <source>
        <strain>C57BL/6J</strain>
        <strain>NOD</strain>
        <tissue>Brain</tissue>
        <tissue>Cerebellum</tissue>
        <tissue>Embryo</tissue>
        <tissue>Embryonic heart</tissue>
        <tissue>Testis</tissue>
    </source>
</reference>
<reference key="2">
    <citation type="journal article" date="2009" name="PLoS Biol.">
        <title>Lineage-specific biology revealed by a finished genome assembly of the mouse.</title>
        <authorList>
            <person name="Church D.M."/>
            <person name="Goodstadt L."/>
            <person name="Hillier L.W."/>
            <person name="Zody M.C."/>
            <person name="Goldstein S."/>
            <person name="She X."/>
            <person name="Bult C.J."/>
            <person name="Agarwala R."/>
            <person name="Cherry J.L."/>
            <person name="DiCuccio M."/>
            <person name="Hlavina W."/>
            <person name="Kapustin Y."/>
            <person name="Meric P."/>
            <person name="Maglott D."/>
            <person name="Birtle Z."/>
            <person name="Marques A.C."/>
            <person name="Graves T."/>
            <person name="Zhou S."/>
            <person name="Teague B."/>
            <person name="Potamousis K."/>
            <person name="Churas C."/>
            <person name="Place M."/>
            <person name="Herschleb J."/>
            <person name="Runnheim R."/>
            <person name="Forrest D."/>
            <person name="Amos-Landgraf J."/>
            <person name="Schwartz D.C."/>
            <person name="Cheng Z."/>
            <person name="Lindblad-Toh K."/>
            <person name="Eichler E.E."/>
            <person name="Ponting C.P."/>
        </authorList>
    </citation>
    <scope>NUCLEOTIDE SEQUENCE [LARGE SCALE GENOMIC DNA]</scope>
    <source>
        <strain>C57BL/6J</strain>
    </source>
</reference>
<reference key="3">
    <citation type="journal article" date="2004" name="Genome Res.">
        <title>The status, quality, and expansion of the NIH full-length cDNA project: the Mammalian Gene Collection (MGC).</title>
        <authorList>
            <consortium name="The MGC Project Team"/>
        </authorList>
    </citation>
    <scope>NUCLEOTIDE SEQUENCE [LARGE SCALE MRNA] (ISOFORM 1)</scope>
    <source>
        <strain>FVB/N</strain>
        <tissue>Kidney</tissue>
        <tissue>Liver</tissue>
    </source>
</reference>
<reference key="4">
    <citation type="journal article" date="2010" name="Cell">
        <title>A tissue-specific atlas of mouse protein phosphorylation and expression.</title>
        <authorList>
            <person name="Huttlin E.L."/>
            <person name="Jedrychowski M.P."/>
            <person name="Elias J.E."/>
            <person name="Goswami T."/>
            <person name="Rad R."/>
            <person name="Beausoleil S.A."/>
            <person name="Villen J."/>
            <person name="Haas W."/>
            <person name="Sowa M.E."/>
            <person name="Gygi S.P."/>
        </authorList>
    </citation>
    <scope>PHOSPHORYLATION [LARGE SCALE ANALYSIS] AT SER-1008</scope>
    <scope>IDENTIFICATION BY MASS SPECTROMETRY [LARGE SCALE ANALYSIS]</scope>
    <source>
        <tissue>Brain</tissue>
        <tissue>Kidney</tissue>
        <tissue>Pancreas</tissue>
        <tissue>Testis</tissue>
    </source>
</reference>
<reference key="5">
    <citation type="journal article" date="2016" name="Nature">
        <title>An essential receptor for adeno-associated virus infection.</title>
        <authorList>
            <person name="Pillay S."/>
            <person name="Meyer N.L."/>
            <person name="Puschnik A.S."/>
            <person name="Davulcu O."/>
            <person name="Diep J."/>
            <person name="Ishikawa Y."/>
            <person name="Jae L.T."/>
            <person name="Wosen J.E."/>
            <person name="Nagamine C.M."/>
            <person name="Chapman M.S."/>
            <person name="Carette J.E."/>
        </authorList>
    </citation>
    <scope>DISRUPTION PHENOTYPE</scope>
    <scope>FUNCTION (MICROBIAL INFECTION)</scope>
</reference>
<organism>
    <name type="scientific">Mus musculus</name>
    <name type="common">Mouse</name>
    <dbReference type="NCBI Taxonomy" id="10090"/>
    <lineage>
        <taxon>Eukaryota</taxon>
        <taxon>Metazoa</taxon>
        <taxon>Chordata</taxon>
        <taxon>Craniata</taxon>
        <taxon>Vertebrata</taxon>
        <taxon>Euteleostomi</taxon>
        <taxon>Mammalia</taxon>
        <taxon>Eutheria</taxon>
        <taxon>Euarchontoglires</taxon>
        <taxon>Glires</taxon>
        <taxon>Rodentia</taxon>
        <taxon>Myomorpha</taxon>
        <taxon>Muroidea</taxon>
        <taxon>Muridae</taxon>
        <taxon>Murinae</taxon>
        <taxon>Mus</taxon>
        <taxon>Mus</taxon>
    </lineage>
</organism>
<comment type="function">
    <text evidence="2">Possible role in axon guidance through interaction with RTN4R.</text>
</comment>
<comment type="function">
    <text evidence="11">(Microbial infection) Acts as a receptor for adeno-associated virus and is involved in adeno-associated virus infection through endocytosis system.</text>
</comment>
<comment type="subunit">
    <text evidence="2">Interacts with RTN4R.</text>
</comment>
<comment type="subcellular location">
    <subcellularLocation>
        <location evidence="2">Cytoplasmic granule membrane</location>
        <topology evidence="2">Multi-pass membrane protein</topology>
    </subcellularLocation>
    <subcellularLocation>
        <location evidence="2">Golgi apparatus membrane</location>
        <topology>Multi-pass membrane protein</topology>
    </subcellularLocation>
    <subcellularLocation>
        <location evidence="2">Golgi apparatus</location>
        <location evidence="2">trans-Golgi network membrane</location>
        <topology evidence="2">Multi-pass membrane protein</topology>
    </subcellularLocation>
    <subcellularLocation>
        <location evidence="2">Cell membrane</location>
        <topology evidence="2">Multi-pass membrane protein</topology>
    </subcellularLocation>
    <text evidence="2">Traffics from the plasma membrane to the trans-Golgi network.</text>
</comment>
<comment type="alternative products">
    <event type="alternative splicing"/>
    <isoform>
        <id>Q8K135-1</id>
        <name>1</name>
        <sequence type="displayed"/>
    </isoform>
    <isoform>
        <id>Q8K135-2</id>
        <name>2</name>
        <sequence type="described" ref="VSP_032956"/>
    </isoform>
</comment>
<comment type="PTM">
    <text evidence="1">N-glycosylated.</text>
</comment>
<comment type="disruption phenotype">
    <text evidence="7">Homozygous knockout mice Kiaa0319l are normal.</text>
</comment>
<comment type="sequence caution" evidence="10">
    <conflict type="miscellaneous discrepancy">
        <sequence resource="EMBL-CDS" id="AAH22154"/>
    </conflict>
    <text>Contaminating sequence. Sequence of unknown origin in the N-terminal part.</text>
</comment>
<accession>Q8K135</accession>
<accession>A2A790</accession>
<accession>Q3TTA3</accession>
<accession>Q8BHR5</accession>
<accession>Q8BHU7</accession>
<accession>Q8BHZ3</accession>
<accession>Q8VBZ9</accession>